<gene>
    <name type="primary">fic</name>
    <name type="ordered locus">SO_4266</name>
</gene>
<feature type="chain" id="PRO_0000417548" description="Protein adenylyltransferase SoFic">
    <location>
        <begin position="1"/>
        <end position="372"/>
    </location>
</feature>
<feature type="domain" description="Fido" evidence="1">
    <location>
        <begin position="121"/>
        <end position="262"/>
    </location>
</feature>
<feature type="short sequence motif" description="Inhibitory (S/T)XXXE(G/N) motif">
    <location>
        <begin position="69"/>
        <end position="74"/>
    </location>
</feature>
<feature type="binding site">
    <location>
        <position position="73"/>
    </location>
    <ligand>
        <name>ATP</name>
        <dbReference type="ChEBI" id="CHEBI:30616"/>
    </ligand>
</feature>
<feature type="binding site">
    <location>
        <position position="198"/>
    </location>
    <ligand>
        <name>ATP</name>
        <dbReference type="ChEBI" id="CHEBI:30616"/>
    </ligand>
</feature>
<feature type="binding site">
    <location>
        <begin position="203"/>
        <end position="209"/>
    </location>
    <ligand>
        <name>ATP</name>
        <dbReference type="ChEBI" id="CHEBI:30616"/>
    </ligand>
</feature>
<feature type="binding site">
    <location>
        <position position="240"/>
    </location>
    <ligand>
        <name>ATP</name>
        <dbReference type="ChEBI" id="CHEBI:30616"/>
    </ligand>
</feature>
<feature type="mutagenesis site" description="Promotes adenylyltransferase activity." evidence="3 4">
    <original>E</original>
    <variation>G</variation>
    <location>
        <position position="73"/>
    </location>
</feature>
<feature type="helix" evidence="6">
    <location>
        <begin position="20"/>
        <end position="25"/>
    </location>
</feature>
<feature type="helix" evidence="6">
    <location>
        <begin position="28"/>
        <end position="50"/>
    </location>
</feature>
<feature type="helix" evidence="6">
    <location>
        <begin position="54"/>
        <end position="72"/>
    </location>
</feature>
<feature type="helix" evidence="6">
    <location>
        <begin position="79"/>
        <end position="85"/>
    </location>
</feature>
<feature type="helix" evidence="6">
    <location>
        <begin position="94"/>
        <end position="112"/>
    </location>
</feature>
<feature type="turn" evidence="6">
    <location>
        <begin position="113"/>
        <end position="115"/>
    </location>
</feature>
<feature type="helix" evidence="6">
    <location>
        <begin position="120"/>
        <end position="131"/>
    </location>
</feature>
<feature type="turn" evidence="6">
    <location>
        <begin position="148"/>
        <end position="150"/>
    </location>
</feature>
<feature type="strand" evidence="6">
    <location>
        <begin position="153"/>
        <end position="155"/>
    </location>
</feature>
<feature type="helix" evidence="6">
    <location>
        <begin position="161"/>
        <end position="176"/>
    </location>
</feature>
<feature type="helix" evidence="6">
    <location>
        <begin position="183"/>
        <end position="197"/>
    </location>
</feature>
<feature type="strand" evidence="6">
    <location>
        <begin position="200"/>
        <end position="202"/>
    </location>
</feature>
<feature type="helix" evidence="6">
    <location>
        <begin position="204"/>
        <end position="218"/>
    </location>
</feature>
<feature type="strand" evidence="6">
    <location>
        <begin position="223"/>
        <end position="225"/>
    </location>
</feature>
<feature type="helix" evidence="6">
    <location>
        <begin position="230"/>
        <end position="235"/>
    </location>
</feature>
<feature type="helix" evidence="6">
    <location>
        <begin position="237"/>
        <end position="250"/>
    </location>
</feature>
<feature type="helix" evidence="6">
    <location>
        <begin position="253"/>
        <end position="292"/>
    </location>
</feature>
<feature type="turn" evidence="6">
    <location>
        <begin position="294"/>
        <end position="296"/>
    </location>
</feature>
<feature type="helix" evidence="6">
    <location>
        <begin position="299"/>
        <end position="307"/>
    </location>
</feature>
<feature type="strand" evidence="6">
    <location>
        <begin position="309"/>
        <end position="312"/>
    </location>
</feature>
<feature type="helix" evidence="6">
    <location>
        <begin position="313"/>
        <end position="318"/>
    </location>
</feature>
<feature type="strand" evidence="6">
    <location>
        <begin position="320"/>
        <end position="322"/>
    </location>
</feature>
<feature type="helix" evidence="6">
    <location>
        <begin position="324"/>
        <end position="336"/>
    </location>
</feature>
<feature type="strand" evidence="6">
    <location>
        <begin position="341"/>
        <end position="345"/>
    </location>
</feature>
<feature type="strand" evidence="7">
    <location>
        <begin position="346"/>
        <end position="348"/>
    </location>
</feature>
<feature type="strand" evidence="6">
    <location>
        <begin position="350"/>
        <end position="352"/>
    </location>
</feature>
<feature type="helix" evidence="6">
    <location>
        <begin position="354"/>
        <end position="361"/>
    </location>
</feature>
<accession>Q8E9K5</accession>
<keyword id="KW-0002">3D-structure</keyword>
<keyword id="KW-0067">ATP-binding</keyword>
<keyword id="KW-0547">Nucleotide-binding</keyword>
<keyword id="KW-0548">Nucleotidyltransferase</keyword>
<keyword id="KW-1185">Reference proteome</keyword>
<keyword id="KW-0808">Transferase</keyword>
<comment type="function">
    <text evidence="3">Adenylyltransferase that mediates the addition of adenosine 5'-monophosphate (AMP) to specific residues of target proteins.</text>
</comment>
<comment type="catalytic activity">
    <reaction evidence="4">
        <text>L-tyrosyl-[protein] + ATP = O-(5'-adenylyl)-L-tyrosyl-[protein] + diphosphate</text>
        <dbReference type="Rhea" id="RHEA:54288"/>
        <dbReference type="Rhea" id="RHEA-COMP:10136"/>
        <dbReference type="Rhea" id="RHEA-COMP:13846"/>
        <dbReference type="ChEBI" id="CHEBI:30616"/>
        <dbReference type="ChEBI" id="CHEBI:33019"/>
        <dbReference type="ChEBI" id="CHEBI:46858"/>
        <dbReference type="ChEBI" id="CHEBI:83624"/>
        <dbReference type="EC" id="2.7.7.108"/>
    </reaction>
</comment>
<comment type="catalytic activity">
    <reaction evidence="4">
        <text>L-threonyl-[protein] + ATP = 3-O-(5'-adenylyl)-L-threonyl-[protein] + diphosphate</text>
        <dbReference type="Rhea" id="RHEA:54292"/>
        <dbReference type="Rhea" id="RHEA-COMP:11060"/>
        <dbReference type="Rhea" id="RHEA-COMP:13847"/>
        <dbReference type="ChEBI" id="CHEBI:30013"/>
        <dbReference type="ChEBI" id="CHEBI:30616"/>
        <dbReference type="ChEBI" id="CHEBI:33019"/>
        <dbReference type="ChEBI" id="CHEBI:138113"/>
        <dbReference type="EC" id="2.7.7.108"/>
    </reaction>
</comment>
<comment type="activity regulation">
    <text evidence="3">Adenylyltransferase activity is inhibited by the inhibitory helix present at the N-terminus: Glu-73 binds ATP and competes with ATP-binding at Arg-209, thereby preventing adenylyltransferase activity. Activation dissociates ATP-binding from Glu-73, allowing ordered binding of the entire ATP moiety with the alpha-phosphate in an orientation that is productive for accepting an incoming target hydroxyl side chain.</text>
</comment>
<comment type="subunit">
    <text evidence="2">Homodimer.</text>
</comment>
<comment type="miscellaneous">
    <text evidence="5">Defined as class II fido-domain containing proteins, in which the inhibitory helix is present at the N-terminus of the Fido domain.</text>
</comment>
<reference key="1">
    <citation type="journal article" date="2002" name="Nat. Biotechnol.">
        <title>Genome sequence of the dissimilatory metal ion-reducing bacterium Shewanella oneidensis.</title>
        <authorList>
            <person name="Heidelberg J.F."/>
            <person name="Paulsen I.T."/>
            <person name="Nelson K.E."/>
            <person name="Gaidos E.J."/>
            <person name="Nelson W.C."/>
            <person name="Read T.D."/>
            <person name="Eisen J.A."/>
            <person name="Seshadri R."/>
            <person name="Ward N.L."/>
            <person name="Methe B.A."/>
            <person name="Clayton R.A."/>
            <person name="Meyer T."/>
            <person name="Tsapin A."/>
            <person name="Scott J."/>
            <person name="Beanan M.J."/>
            <person name="Brinkac L.M."/>
            <person name="Daugherty S.C."/>
            <person name="DeBoy R.T."/>
            <person name="Dodson R.J."/>
            <person name="Durkin A.S."/>
            <person name="Haft D.H."/>
            <person name="Kolonay J.F."/>
            <person name="Madupu R."/>
            <person name="Peterson J.D."/>
            <person name="Umayam L.A."/>
            <person name="White O."/>
            <person name="Wolf A.M."/>
            <person name="Vamathevan J.J."/>
            <person name="Weidman J.F."/>
            <person name="Impraim M."/>
            <person name="Lee K."/>
            <person name="Berry K.J."/>
            <person name="Lee C."/>
            <person name="Mueller J."/>
            <person name="Khouri H.M."/>
            <person name="Gill J."/>
            <person name="Utterback T.R."/>
            <person name="McDonald L.A."/>
            <person name="Feldblyum T.V."/>
            <person name="Smith H.O."/>
            <person name="Venter J.C."/>
            <person name="Nealson K.H."/>
            <person name="Fraser C.M."/>
        </authorList>
    </citation>
    <scope>NUCLEOTIDE SEQUENCE [LARGE SCALE GENOMIC DNA]</scope>
    <source>
        <strain>ATCC 700550 / JCM 31522 / CIP 106686 / LMG 19005 / NCIMB 14063 / MR-1</strain>
    </source>
</reference>
<reference key="2">
    <citation type="journal article" date="2012" name="Nature">
        <title>Adenylylation control by intra- or intermolecular active-site obstruction in Fic proteins.</title>
        <authorList>
            <person name="Engel P."/>
            <person name="Goepfert A."/>
            <person name="Stanger F.V."/>
            <person name="Harms A."/>
            <person name="Schmidt A."/>
            <person name="Schirmer T."/>
            <person name="Dehio C."/>
        </authorList>
    </citation>
    <scope>FUNCTION</scope>
    <scope>ACTIVITY REGULATION</scope>
    <scope>MUTAGENESIS OF GLU-73</scope>
    <source>
        <strain>ATCC 700550 / JCM 31522 / CIP 106686 / LMG 19005 / NCIMB 14063 / MR-1</strain>
    </source>
</reference>
<reference key="3">
    <citation type="journal article" date="2009" name="Proteins">
        <title>Crystal structure of the Fic (Filamentation induced by cAMP) family protein SO4266 (gi|24375750) from Shewanella oneidensis MR-1 at 1.6 A resolution.</title>
        <authorList>
            <person name="Das D."/>
            <person name="Krishna S.S."/>
            <person name="McMullan D."/>
            <person name="Miller M.D."/>
            <person name="Xu Q."/>
            <person name="Abdubek P."/>
            <person name="Acosta C."/>
            <person name="Astakhova T."/>
            <person name="Axelrod H.L."/>
            <person name="Burra P."/>
            <person name="Carlton D."/>
            <person name="Chiu H.J."/>
            <person name="Clayton T."/>
            <person name="Deller M.C."/>
            <person name="Duan L."/>
            <person name="Elias Y."/>
            <person name="Elsliger M.A."/>
            <person name="Ernst D."/>
            <person name="Feuerhelm J."/>
            <person name="Grzechnik A."/>
            <person name="Grzechnik S.K."/>
            <person name="Hale J."/>
            <person name="Han G.W."/>
            <person name="Jaroszewski L."/>
            <person name="Jin K.K."/>
            <person name="Klock H.E."/>
            <person name="Knuth M.W."/>
            <person name="Kozbial P."/>
            <person name="Kumar A."/>
            <person name="Marciano D."/>
            <person name="Morse A.T."/>
            <person name="Murphy K.D."/>
            <person name="Nigoghossian E."/>
            <person name="Okach L."/>
            <person name="Oommachen S."/>
            <person name="Paulsen J."/>
            <person name="Reyes R."/>
            <person name="Rife C.L."/>
            <person name="Sefcovic N."/>
            <person name="Tien H."/>
            <person name="Trame C.B."/>
            <person name="Trout C.V."/>
            <person name="van den Bedem H."/>
            <person name="Weekes D."/>
            <person name="White A."/>
            <person name="Hodgson K.O."/>
            <person name="Wooley J."/>
            <person name="Deacon A.M."/>
            <person name="Godzik A."/>
            <person name="Lesley S.A."/>
            <person name="Wilson I.A."/>
        </authorList>
    </citation>
    <scope>X-RAY CRYSTALLOGRAPHY (1.60 ANGSTROMS)</scope>
    <scope>SUBUNIT</scope>
    <source>
        <strain>ATCC 700550 / JCM 31522 / CIP 106686 / LMG 19005 / NCIMB 14063 / MR-1</strain>
    </source>
</reference>
<reference key="4">
    <citation type="journal article" date="2013" name="PLoS ONE">
        <title>Conserved inhibitory mechanism and competent ATP binding mode for adenylyltransferases with Fic fold.</title>
        <authorList>
            <person name="Goepfert A."/>
            <person name="Stanger F.V."/>
            <person name="Dehio C."/>
            <person name="Schirmer T."/>
        </authorList>
    </citation>
    <scope>X-RAY CRYSTALLOGRAPHY (1.70 ANGSTROMS) OF 2-372 OF WILD-TYPE AND MUTANT GLU-73 IN COMPLEXES WITH ATP; ATP ANALOG AND MAGNESIUM</scope>
    <scope>CATALYTIC ACTIVITY</scope>
    <scope>MUTAGENESIS OF GLU-73</scope>
</reference>
<dbReference type="EC" id="2.7.7.108" evidence="4"/>
<dbReference type="EMBL" id="AE014299">
    <property type="protein sequence ID" value="AAN57237.1"/>
    <property type="molecule type" value="Genomic_DNA"/>
</dbReference>
<dbReference type="RefSeq" id="NP_719793.1">
    <property type="nucleotide sequence ID" value="NC_004347.2"/>
</dbReference>
<dbReference type="RefSeq" id="WP_011073937.1">
    <property type="nucleotide sequence ID" value="NC_004347.2"/>
</dbReference>
<dbReference type="PDB" id="3EQX">
    <property type="method" value="X-ray"/>
    <property type="resolution" value="1.60 A"/>
    <property type="chains" value="A/B=1-372"/>
</dbReference>
<dbReference type="PDB" id="3ZCN">
    <property type="method" value="X-ray"/>
    <property type="resolution" value="1.70 A"/>
    <property type="chains" value="A/B=2-372"/>
</dbReference>
<dbReference type="PDB" id="3ZEC">
    <property type="method" value="X-ray"/>
    <property type="resolution" value="2.20 A"/>
    <property type="chains" value="A/B=2-372"/>
</dbReference>
<dbReference type="PDBsum" id="3EQX"/>
<dbReference type="PDBsum" id="3ZCN"/>
<dbReference type="PDBsum" id="3ZEC"/>
<dbReference type="SMR" id="Q8E9K5"/>
<dbReference type="DIP" id="DIP-60139N"/>
<dbReference type="STRING" id="211586.SO_4266"/>
<dbReference type="PaxDb" id="211586-SO_4266"/>
<dbReference type="DNASU" id="1171869"/>
<dbReference type="KEGG" id="son:SO_4266"/>
<dbReference type="PATRIC" id="fig|211586.12.peg.4125"/>
<dbReference type="eggNOG" id="COG3177">
    <property type="taxonomic scope" value="Bacteria"/>
</dbReference>
<dbReference type="HOGENOM" id="CLU_047250_1_1_6"/>
<dbReference type="OrthoDB" id="9807853at2"/>
<dbReference type="PhylomeDB" id="Q8E9K5"/>
<dbReference type="BioCyc" id="SONE211586:G1GMP-3941-MONOMER"/>
<dbReference type="BRENDA" id="2.7.7.B23">
    <property type="organism ID" value="5706"/>
</dbReference>
<dbReference type="EvolutionaryTrace" id="Q8E9K5"/>
<dbReference type="Proteomes" id="UP000008186">
    <property type="component" value="Chromosome"/>
</dbReference>
<dbReference type="GO" id="GO:0070733">
    <property type="term" value="F:AMPylase activity"/>
    <property type="evidence" value="ECO:0000314"/>
    <property type="project" value="UniProtKB"/>
</dbReference>
<dbReference type="GO" id="GO:0005524">
    <property type="term" value="F:ATP binding"/>
    <property type="evidence" value="ECO:0000314"/>
    <property type="project" value="UniProtKB"/>
</dbReference>
<dbReference type="GO" id="GO:0000287">
    <property type="term" value="F:magnesium ion binding"/>
    <property type="evidence" value="ECO:0000314"/>
    <property type="project" value="UniProtKB"/>
</dbReference>
<dbReference type="GO" id="GO:0042803">
    <property type="term" value="F:protein homodimerization activity"/>
    <property type="evidence" value="ECO:0000314"/>
    <property type="project" value="UniProtKB"/>
</dbReference>
<dbReference type="GO" id="GO:0018117">
    <property type="term" value="P:protein adenylylation"/>
    <property type="evidence" value="ECO:0000314"/>
    <property type="project" value="UniProtKB"/>
</dbReference>
<dbReference type="FunFam" id="1.10.3290.10:FF:000007">
    <property type="entry name" value="Protein adenylyltransferase SoFic"/>
    <property type="match status" value="1"/>
</dbReference>
<dbReference type="Gene3D" id="1.10.3290.10">
    <property type="entry name" value="Fido-like domain"/>
    <property type="match status" value="1"/>
</dbReference>
<dbReference type="InterPro" id="IPR025758">
    <property type="entry name" value="Fic/DOC_N"/>
</dbReference>
<dbReference type="InterPro" id="IPR003812">
    <property type="entry name" value="Fido"/>
</dbReference>
<dbReference type="InterPro" id="IPR036597">
    <property type="entry name" value="Fido-like_dom_sf"/>
</dbReference>
<dbReference type="InterPro" id="IPR040198">
    <property type="entry name" value="Fido_containing"/>
</dbReference>
<dbReference type="InterPro" id="IPR026287">
    <property type="entry name" value="SoFic-like"/>
</dbReference>
<dbReference type="InterPro" id="IPR048770">
    <property type="entry name" value="SoFic-like_C"/>
</dbReference>
<dbReference type="NCBIfam" id="NF046030">
    <property type="entry name" value="ProtAdlyltaseSoFic"/>
    <property type="match status" value="1"/>
</dbReference>
<dbReference type="PANTHER" id="PTHR13504">
    <property type="entry name" value="FIDO DOMAIN-CONTAINING PROTEIN DDB_G0283145"/>
    <property type="match status" value="1"/>
</dbReference>
<dbReference type="PANTHER" id="PTHR13504:SF35">
    <property type="entry name" value="PROTEIN ADENYLYLTRANSFERASE SOFIC"/>
    <property type="match status" value="1"/>
</dbReference>
<dbReference type="Pfam" id="PF02661">
    <property type="entry name" value="Fic"/>
    <property type="match status" value="1"/>
</dbReference>
<dbReference type="Pfam" id="PF13784">
    <property type="entry name" value="Fic_N"/>
    <property type="match status" value="1"/>
</dbReference>
<dbReference type="Pfam" id="PF21248">
    <property type="entry name" value="SoFic-like_C"/>
    <property type="match status" value="1"/>
</dbReference>
<dbReference type="PIRSF" id="PIRSF038925">
    <property type="entry name" value="AMP-prot_trans"/>
    <property type="match status" value="1"/>
</dbReference>
<dbReference type="SUPFAM" id="SSF140931">
    <property type="entry name" value="Fic-like"/>
    <property type="match status" value="1"/>
</dbReference>
<dbReference type="PROSITE" id="PS51459">
    <property type="entry name" value="FIDO"/>
    <property type="match status" value="1"/>
</dbReference>
<name>SOFIC_SHEON</name>
<proteinExistence type="evidence at protein level"/>
<evidence type="ECO:0000255" key="1">
    <source>
        <dbReference type="PROSITE-ProRule" id="PRU00791"/>
    </source>
</evidence>
<evidence type="ECO:0000269" key="2">
    <source>
    </source>
</evidence>
<evidence type="ECO:0000269" key="3">
    <source>
    </source>
</evidence>
<evidence type="ECO:0000269" key="4">
    <source>
    </source>
</evidence>
<evidence type="ECO:0000305" key="5">
    <source>
    </source>
</evidence>
<evidence type="ECO:0007829" key="6">
    <source>
        <dbReference type="PDB" id="3EQX"/>
    </source>
</evidence>
<evidence type="ECO:0007829" key="7">
    <source>
        <dbReference type="PDB" id="3ZEC"/>
    </source>
</evidence>
<protein>
    <recommendedName>
        <fullName>Protein adenylyltransferase SoFic</fullName>
        <ecNumber evidence="4">2.7.7.108</ecNumber>
    </recommendedName>
    <alternativeName>
        <fullName>AMPylator SoFic</fullName>
    </alternativeName>
</protein>
<sequence length="372" mass="42225">MEWQAEQAYNHLPPLPLDSKLAELAETLPILKACIPARAALAELKQAGELLPNQGLLINLLPLLEAQGSSEIENIVTTTDKLFQYAQEDSQADPMTKEALRYRTALYQGFTQLSNRPLCVTTALEICSTIKSVQMDVRKVPGTSLTNQATGEVIYTPPAGESVIRDLLSNWEAFLHNQDDVDPLIKMAMAHYQFEAIHPFIDGNGRTGRVLNILYLIDQQLLSAPILYLSRYIVAHKQDYYRLLLNVTTQQEWQPWIIFILNAVEQTAKWTTHKIAAARELIAHTTEYVRQQLPKIYSHELVQVIFEQPYCRIQNLVESGLAKRQTASVYLKQLCDIGVLEEVQSGKEKLFVHPKFVTLMTKDSNQFSRYAL</sequence>
<organism>
    <name type="scientific">Shewanella oneidensis (strain ATCC 700550 / JCM 31522 / CIP 106686 / LMG 19005 / NCIMB 14063 / MR-1)</name>
    <dbReference type="NCBI Taxonomy" id="211586"/>
    <lineage>
        <taxon>Bacteria</taxon>
        <taxon>Pseudomonadati</taxon>
        <taxon>Pseudomonadota</taxon>
        <taxon>Gammaproteobacteria</taxon>
        <taxon>Alteromonadales</taxon>
        <taxon>Shewanellaceae</taxon>
        <taxon>Shewanella</taxon>
    </lineage>
</organism>